<organism>
    <name type="scientific">Chlorobium limicola</name>
    <dbReference type="NCBI Taxonomy" id="1092"/>
    <lineage>
        <taxon>Bacteria</taxon>
        <taxon>Pseudomonadati</taxon>
        <taxon>Chlorobiota</taxon>
        <taxon>Chlorobiia</taxon>
        <taxon>Chlorobiales</taxon>
        <taxon>Chlorobiaceae</taxon>
        <taxon>Chlorobium/Pelodictyon group</taxon>
        <taxon>Chlorobium</taxon>
    </lineage>
</organism>
<comment type="function">
    <text>Ferredoxins are iron-sulfur proteins that transfer electrons in a wide variety of metabolic reactions.</text>
</comment>
<comment type="cofactor">
    <cofactor>
        <name>[4Fe-4S] cluster</name>
        <dbReference type="ChEBI" id="CHEBI:49883"/>
    </cofactor>
    <text>Binds 2 [4Fe-4S] clusters.</text>
</comment>
<name>FER2_CHLLI</name>
<feature type="chain" id="PRO_0000159123" description="Ferredoxin-2">
    <location>
        <begin position="1"/>
        <end position="61"/>
    </location>
</feature>
<feature type="domain" description="4Fe-4S ferredoxin-type 1" evidence="2">
    <location>
        <begin position="2"/>
        <end position="27"/>
    </location>
</feature>
<feature type="domain" description="4Fe-4S ferredoxin-type 2" evidence="2">
    <location>
        <begin position="28"/>
        <end position="61"/>
    </location>
</feature>
<feature type="binding site" evidence="1">
    <location>
        <position position="8"/>
    </location>
    <ligand>
        <name>[4Fe-4S] cluster</name>
        <dbReference type="ChEBI" id="CHEBI:49883"/>
        <label>1</label>
    </ligand>
</feature>
<feature type="binding site" evidence="1">
    <location>
        <position position="11"/>
    </location>
    <ligand>
        <name>[4Fe-4S] cluster</name>
        <dbReference type="ChEBI" id="CHEBI:49883"/>
        <label>1</label>
    </ligand>
</feature>
<feature type="binding site" evidence="1">
    <location>
        <position position="14"/>
    </location>
    <ligand>
        <name>[4Fe-4S] cluster</name>
        <dbReference type="ChEBI" id="CHEBI:49883"/>
        <label>1</label>
    </ligand>
</feature>
<feature type="binding site" evidence="1">
    <location>
        <position position="18"/>
    </location>
    <ligand>
        <name>[4Fe-4S] cluster</name>
        <dbReference type="ChEBI" id="CHEBI:49883"/>
        <label>2</label>
    </ligand>
</feature>
<feature type="binding site" evidence="1">
    <location>
        <position position="37"/>
    </location>
    <ligand>
        <name>[4Fe-4S] cluster</name>
        <dbReference type="ChEBI" id="CHEBI:49883"/>
        <label>2</label>
    </ligand>
</feature>
<feature type="binding site" evidence="1">
    <location>
        <position position="40"/>
    </location>
    <ligand>
        <name>[4Fe-4S] cluster</name>
        <dbReference type="ChEBI" id="CHEBI:49883"/>
        <label>2</label>
    </ligand>
</feature>
<feature type="binding site" evidence="1">
    <location>
        <position position="49"/>
    </location>
    <ligand>
        <name>[4Fe-4S] cluster</name>
        <dbReference type="ChEBI" id="CHEBI:49883"/>
        <label>2</label>
    </ligand>
</feature>
<feature type="binding site" evidence="1">
    <location>
        <position position="53"/>
    </location>
    <ligand>
        <name>[4Fe-4S] cluster</name>
        <dbReference type="ChEBI" id="CHEBI:49883"/>
        <label>1</label>
    </ligand>
</feature>
<accession>P00206</accession>
<keyword id="KW-0004">4Fe-4S</keyword>
<keyword id="KW-0903">Direct protein sequencing</keyword>
<keyword id="KW-0249">Electron transport</keyword>
<keyword id="KW-0408">Iron</keyword>
<keyword id="KW-0411">Iron-sulfur</keyword>
<keyword id="KW-0479">Metal-binding</keyword>
<keyword id="KW-0677">Repeat</keyword>
<keyword id="KW-0813">Transport</keyword>
<reference key="1">
    <citation type="journal article" date="1975" name="Biochemistry">
        <title>The amino acid sequence of ferredoxin II from Chlorobium limicola, a photosynthetic green bacterium.</title>
        <authorList>
            <person name="Tanaka M."/>
            <person name="Haniu M."/>
            <person name="Yasunobu K.T."/>
            <person name="Evans M.C.W."/>
            <person name="Rao K.K."/>
        </authorList>
    </citation>
    <scope>PROTEIN SEQUENCE</scope>
</reference>
<evidence type="ECO:0000250" key="1"/>
<evidence type="ECO:0000255" key="2">
    <source>
        <dbReference type="PROSITE-ProRule" id="PRU00711"/>
    </source>
</evidence>
<dbReference type="PIR" id="A00208">
    <property type="entry name" value="FECI2"/>
</dbReference>
<dbReference type="SMR" id="P00206"/>
<dbReference type="GO" id="GO:0051539">
    <property type="term" value="F:4 iron, 4 sulfur cluster binding"/>
    <property type="evidence" value="ECO:0007669"/>
    <property type="project" value="UniProtKB-KW"/>
</dbReference>
<dbReference type="GO" id="GO:0046872">
    <property type="term" value="F:metal ion binding"/>
    <property type="evidence" value="ECO:0007669"/>
    <property type="project" value="UniProtKB-KW"/>
</dbReference>
<dbReference type="FunFam" id="3.30.70.20:FF:000045">
    <property type="entry name" value="Ferredoxin, 4Fe-4S"/>
    <property type="match status" value="1"/>
</dbReference>
<dbReference type="Gene3D" id="3.30.70.20">
    <property type="match status" value="1"/>
</dbReference>
<dbReference type="InterPro" id="IPR017896">
    <property type="entry name" value="4Fe4S_Fe-S-bd"/>
</dbReference>
<dbReference type="InterPro" id="IPR017900">
    <property type="entry name" value="4Fe4S_Fe_S_CS"/>
</dbReference>
<dbReference type="Pfam" id="PF00037">
    <property type="entry name" value="Fer4"/>
    <property type="match status" value="1"/>
</dbReference>
<dbReference type="SUPFAM" id="SSF54862">
    <property type="entry name" value="4Fe-4S ferredoxins"/>
    <property type="match status" value="1"/>
</dbReference>
<dbReference type="PROSITE" id="PS00198">
    <property type="entry name" value="4FE4S_FER_1"/>
    <property type="match status" value="1"/>
</dbReference>
<dbReference type="PROSITE" id="PS51379">
    <property type="entry name" value="4FE4S_FER_2"/>
    <property type="match status" value="2"/>
</dbReference>
<proteinExistence type="evidence at protein level"/>
<sequence>AHRITEECTYCAACEPECPVNAISAGDEIYIVDESVCTDCEGYYDEPACVAVCPVDCIIKV</sequence>
<protein>
    <recommendedName>
        <fullName>Ferredoxin-2</fullName>
    </recommendedName>
    <alternativeName>
        <fullName>Ferredoxin II</fullName>
        <shortName>FdII</shortName>
    </alternativeName>
</protein>